<name>WECA_ECOL6</name>
<evidence type="ECO:0000255" key="1">
    <source>
        <dbReference type="HAMAP-Rule" id="MF_02030"/>
    </source>
</evidence>
<keyword id="KW-0997">Cell inner membrane</keyword>
<keyword id="KW-1003">Cell membrane</keyword>
<keyword id="KW-0328">Glycosyltransferase</keyword>
<keyword id="KW-0448">Lipopolysaccharide biosynthesis</keyword>
<keyword id="KW-0460">Magnesium</keyword>
<keyword id="KW-0464">Manganese</keyword>
<keyword id="KW-0472">Membrane</keyword>
<keyword id="KW-1185">Reference proteome</keyword>
<keyword id="KW-0808">Transferase</keyword>
<keyword id="KW-0812">Transmembrane</keyword>
<keyword id="KW-1133">Transmembrane helix</keyword>
<organism>
    <name type="scientific">Escherichia coli O6:H1 (strain CFT073 / ATCC 700928 / UPEC)</name>
    <dbReference type="NCBI Taxonomy" id="199310"/>
    <lineage>
        <taxon>Bacteria</taxon>
        <taxon>Pseudomonadati</taxon>
        <taxon>Pseudomonadota</taxon>
        <taxon>Gammaproteobacteria</taxon>
        <taxon>Enterobacterales</taxon>
        <taxon>Enterobacteriaceae</taxon>
        <taxon>Escherichia</taxon>
    </lineage>
</organism>
<reference key="1">
    <citation type="journal article" date="2002" name="Proc. Natl. Acad. Sci. U.S.A.">
        <title>Extensive mosaic structure revealed by the complete genome sequence of uropathogenic Escherichia coli.</title>
        <authorList>
            <person name="Welch R.A."/>
            <person name="Burland V."/>
            <person name="Plunkett G. III"/>
            <person name="Redford P."/>
            <person name="Roesch P."/>
            <person name="Rasko D."/>
            <person name="Buckles E.L."/>
            <person name="Liou S.-R."/>
            <person name="Boutin A."/>
            <person name="Hackett J."/>
            <person name="Stroud D."/>
            <person name="Mayhew G.F."/>
            <person name="Rose D.J."/>
            <person name="Zhou S."/>
            <person name="Schwartz D.C."/>
            <person name="Perna N.T."/>
            <person name="Mobley H.L.T."/>
            <person name="Donnenberg M.S."/>
            <person name="Blattner F.R."/>
        </authorList>
    </citation>
    <scope>NUCLEOTIDE SEQUENCE [LARGE SCALE GENOMIC DNA]</scope>
    <source>
        <strain>CFT073 / ATCC 700928 / UPEC</strain>
    </source>
</reference>
<dbReference type="EC" id="2.7.8.33" evidence="1"/>
<dbReference type="EMBL" id="AE014075">
    <property type="protein sequence ID" value="AAN83137.1"/>
    <property type="molecule type" value="Genomic_DNA"/>
</dbReference>
<dbReference type="RefSeq" id="WP_001050960.1">
    <property type="nucleotide sequence ID" value="NZ_CP051263.1"/>
</dbReference>
<dbReference type="SMR" id="P0AC79"/>
<dbReference type="STRING" id="199310.c4704"/>
<dbReference type="GeneID" id="93778160"/>
<dbReference type="KEGG" id="ecc:c4704"/>
<dbReference type="eggNOG" id="COG0472">
    <property type="taxonomic scope" value="Bacteria"/>
</dbReference>
<dbReference type="HOGENOM" id="CLU_023982_1_0_6"/>
<dbReference type="BioCyc" id="ECOL199310:C4704-MONOMER"/>
<dbReference type="UniPathway" id="UPA00281"/>
<dbReference type="UniPathway" id="UPA00566"/>
<dbReference type="Proteomes" id="UP000001410">
    <property type="component" value="Chromosome"/>
</dbReference>
<dbReference type="GO" id="GO:0009276">
    <property type="term" value="C:Gram-negative-bacterium-type cell wall"/>
    <property type="evidence" value="ECO:0000250"/>
    <property type="project" value="UniProtKB"/>
</dbReference>
<dbReference type="GO" id="GO:0005886">
    <property type="term" value="C:plasma membrane"/>
    <property type="evidence" value="ECO:0007669"/>
    <property type="project" value="UniProtKB-SubCell"/>
</dbReference>
<dbReference type="GO" id="GO:0016757">
    <property type="term" value="F:glycosyltransferase activity"/>
    <property type="evidence" value="ECO:0007669"/>
    <property type="project" value="UniProtKB-KW"/>
</dbReference>
<dbReference type="GO" id="GO:0000287">
    <property type="term" value="F:magnesium ion binding"/>
    <property type="evidence" value="ECO:0000250"/>
    <property type="project" value="UniProtKB"/>
</dbReference>
<dbReference type="GO" id="GO:0030145">
    <property type="term" value="F:manganese ion binding"/>
    <property type="evidence" value="ECO:0000250"/>
    <property type="project" value="UniProtKB"/>
</dbReference>
<dbReference type="GO" id="GO:0016780">
    <property type="term" value="F:phosphotransferase activity, for other substituted phosphate groups"/>
    <property type="evidence" value="ECO:0000250"/>
    <property type="project" value="UniProtKB"/>
</dbReference>
<dbReference type="GO" id="GO:0036380">
    <property type="term" value="F:UDP-N-acetylglucosamine-undecaprenyl-phosphate N-acetylglucosaminephosphotransferase activity"/>
    <property type="evidence" value="ECO:0007669"/>
    <property type="project" value="UniProtKB-UniRule"/>
</dbReference>
<dbReference type="GO" id="GO:0044038">
    <property type="term" value="P:cell wall macromolecule biosynthetic process"/>
    <property type="evidence" value="ECO:0000250"/>
    <property type="project" value="UniProtKB"/>
</dbReference>
<dbReference type="GO" id="GO:0071555">
    <property type="term" value="P:cell wall organization"/>
    <property type="evidence" value="ECO:0000250"/>
    <property type="project" value="UniProtKB"/>
</dbReference>
<dbReference type="GO" id="GO:0009246">
    <property type="term" value="P:enterobacterial common antigen biosynthetic process"/>
    <property type="evidence" value="ECO:0007669"/>
    <property type="project" value="UniProtKB-UniRule"/>
</dbReference>
<dbReference type="GO" id="GO:0009103">
    <property type="term" value="P:lipopolysaccharide biosynthetic process"/>
    <property type="evidence" value="ECO:0000250"/>
    <property type="project" value="UniProtKB"/>
</dbReference>
<dbReference type="GO" id="GO:0009243">
    <property type="term" value="P:O antigen biosynthetic process"/>
    <property type="evidence" value="ECO:0007669"/>
    <property type="project" value="UniProtKB-UniRule"/>
</dbReference>
<dbReference type="CDD" id="cd06853">
    <property type="entry name" value="GT_WecA_like"/>
    <property type="match status" value="1"/>
</dbReference>
<dbReference type="HAMAP" id="MF_02030">
    <property type="entry name" value="WecA_Gammaproteo"/>
    <property type="match status" value="1"/>
</dbReference>
<dbReference type="InterPro" id="IPR012750">
    <property type="entry name" value="ECA_WecA-rel"/>
</dbReference>
<dbReference type="InterPro" id="IPR000715">
    <property type="entry name" value="Glycosyl_transferase_4"/>
</dbReference>
<dbReference type="NCBIfam" id="TIGR02380">
    <property type="entry name" value="ECA_wecA"/>
    <property type="match status" value="1"/>
</dbReference>
<dbReference type="PANTHER" id="PTHR22926">
    <property type="entry name" value="PHOSPHO-N-ACETYLMURAMOYL-PENTAPEPTIDE-TRANSFERASE"/>
    <property type="match status" value="1"/>
</dbReference>
<dbReference type="PANTHER" id="PTHR22926:SF3">
    <property type="entry name" value="UNDECAPRENYL-PHOSPHATE ALPHA-N-ACETYLGLUCOSAMINYL 1-PHOSPHATE TRANSFERASE"/>
    <property type="match status" value="1"/>
</dbReference>
<dbReference type="Pfam" id="PF00953">
    <property type="entry name" value="Glycos_transf_4"/>
    <property type="match status" value="1"/>
</dbReference>
<sequence>MNLLTVSTDLISIFLFTTLFLFFARKVAKKVGLVDKPNFRKRHQGLIPLVGGISVYAGICFTFGIVDYYIPHASLYLACAGVLVFIGALDDRFDISVKIRATIQAAVGIVMMVFGKLYLSSLGYIFGSWEMVLGPFGYFLTLFAVWAAINAFNMVDGIDGLLGGLSCVSFAAIGMILWFDGQTSLAIWCFAMIAAILPYIMLNLGILGRRYKVFMGDAGSTLIGFTVIWILLETTQGKTHPISPVTALWIIAIPLMDMVAIMYRRLRKGMSPFSPDRQHIHHLIMRAGFTSRQAFVLITLAAALLASIGVLAEYSHFVPEWVMLVLFLLAFFLYGYCIKRAWKVARFIKRVKRRLRRNRGGSPNLTK</sequence>
<accession>P0AC79</accession>
<accession>P24235</accession>
<accession>P76751</accession>
<accession>Q9F8C8</accession>
<comment type="function">
    <text evidence="1">Catalyzes the transfer of the GlcNAc-1-phosphate moiety from UDP-GlcNAc onto the carrier lipid undecaprenyl phosphate (C55-P), yielding GlcNAc-pyrophosphoryl-undecaprenyl (GlcNAc-PP-C55).</text>
</comment>
<comment type="catalytic activity">
    <reaction evidence="1">
        <text>di-trans,octa-cis-undecaprenyl phosphate + UDP-N-acetyl-alpha-D-glucosamine = N-acetyl-alpha-D-glucosaminyl-di-trans,octa-cis-undecaprenyl diphosphate + UMP</text>
        <dbReference type="Rhea" id="RHEA:28090"/>
        <dbReference type="ChEBI" id="CHEBI:57705"/>
        <dbReference type="ChEBI" id="CHEBI:57865"/>
        <dbReference type="ChEBI" id="CHEBI:60392"/>
        <dbReference type="ChEBI" id="CHEBI:62959"/>
        <dbReference type="EC" id="2.7.8.33"/>
    </reaction>
</comment>
<comment type="cofactor">
    <cofactor evidence="1">
        <name>Mg(2+)</name>
        <dbReference type="ChEBI" id="CHEBI:18420"/>
    </cofactor>
</comment>
<comment type="cofactor">
    <cofactor evidence="1">
        <name>Mn(2+)</name>
        <dbReference type="ChEBI" id="CHEBI:29035"/>
    </cofactor>
</comment>
<comment type="pathway">
    <text evidence="1">Bacterial outer membrane biogenesis; LPS O-antigen biosynthesis.</text>
</comment>
<comment type="pathway">
    <text evidence="1">Bacterial outer membrane biogenesis; enterobacterial common antigen biosynthesis.</text>
</comment>
<comment type="subcellular location">
    <subcellularLocation>
        <location evidence="1">Cell inner membrane</location>
        <topology evidence="1">Multi-pass membrane protein</topology>
    </subcellularLocation>
</comment>
<comment type="similarity">
    <text evidence="1">Belongs to the glycosyltransferase 4 family. WecA subfamily.</text>
</comment>
<protein>
    <recommendedName>
        <fullName evidence="1">Undecaprenyl-phosphate alpha-N-acetylglucosaminyl 1-phosphate transferase</fullName>
        <ecNumber evidence="1">2.7.8.33</ecNumber>
    </recommendedName>
    <alternativeName>
        <fullName evidence="1">UDP-GlcNAc:undecaprenyl-phosphate GlcNAc-1-phosphate transferase</fullName>
    </alternativeName>
    <alternativeName>
        <fullName evidence="1">Undecaprenyl-phosphate GlcNAc-1-phosphate transferase</fullName>
    </alternativeName>
</protein>
<proteinExistence type="inferred from homology"/>
<feature type="chain" id="PRO_0000108943" description="Undecaprenyl-phosphate alpha-N-acetylglucosaminyl 1-phosphate transferase">
    <location>
        <begin position="1"/>
        <end position="367"/>
    </location>
</feature>
<feature type="transmembrane region" description="Helical" evidence="1">
    <location>
        <begin position="3"/>
        <end position="23"/>
    </location>
</feature>
<feature type="transmembrane region" description="Helical" evidence="1">
    <location>
        <begin position="46"/>
        <end position="66"/>
    </location>
</feature>
<feature type="transmembrane region" description="Helical" evidence="1">
    <location>
        <begin position="69"/>
        <end position="89"/>
    </location>
</feature>
<feature type="transmembrane region" description="Helical" evidence="1">
    <location>
        <begin position="132"/>
        <end position="152"/>
    </location>
</feature>
<feature type="transmembrane region" description="Helical" evidence="1">
    <location>
        <begin position="158"/>
        <end position="178"/>
    </location>
</feature>
<feature type="transmembrane region" description="Helical" evidence="1">
    <location>
        <begin position="187"/>
        <end position="207"/>
    </location>
</feature>
<feature type="transmembrane region" description="Helical" evidence="1">
    <location>
        <begin position="213"/>
        <end position="233"/>
    </location>
</feature>
<feature type="transmembrane region" description="Helical" evidence="1">
    <location>
        <begin position="242"/>
        <end position="262"/>
    </location>
</feature>
<feature type="transmembrane region" description="Helical" evidence="1">
    <location>
        <begin position="294"/>
        <end position="314"/>
    </location>
</feature>
<feature type="transmembrane region" description="Helical" evidence="1">
    <location>
        <begin position="318"/>
        <end position="338"/>
    </location>
</feature>
<gene>
    <name evidence="1" type="primary">wecA</name>
    <name type="synonym">rfe</name>
    <name type="ordered locus">c4704</name>
</gene>